<reference key="1">
    <citation type="journal article" date="2007" name="PLoS Genet.">
        <title>Patterns and implications of gene gain and loss in the evolution of Prochlorococcus.</title>
        <authorList>
            <person name="Kettler G.C."/>
            <person name="Martiny A.C."/>
            <person name="Huang K."/>
            <person name="Zucker J."/>
            <person name="Coleman M.L."/>
            <person name="Rodrigue S."/>
            <person name="Chen F."/>
            <person name="Lapidus A."/>
            <person name="Ferriera S."/>
            <person name="Johnson J."/>
            <person name="Steglich C."/>
            <person name="Church G.M."/>
            <person name="Richardson P."/>
            <person name="Chisholm S.W."/>
        </authorList>
    </citation>
    <scope>NUCLEOTIDE SEQUENCE [LARGE SCALE GENOMIC DNA]</scope>
    <source>
        <strain>MIT 9301</strain>
    </source>
</reference>
<accession>A3PDJ8</accession>
<organism>
    <name type="scientific">Prochlorococcus marinus (strain MIT 9301)</name>
    <dbReference type="NCBI Taxonomy" id="167546"/>
    <lineage>
        <taxon>Bacteria</taxon>
        <taxon>Bacillati</taxon>
        <taxon>Cyanobacteriota</taxon>
        <taxon>Cyanophyceae</taxon>
        <taxon>Synechococcales</taxon>
        <taxon>Prochlorococcaceae</taxon>
        <taxon>Prochlorococcus</taxon>
    </lineage>
</organism>
<gene>
    <name evidence="1" type="primary">bioB</name>
    <name type="ordered locus">P9301_12001</name>
</gene>
<keyword id="KW-0001">2Fe-2S</keyword>
<keyword id="KW-0004">4Fe-4S</keyword>
<keyword id="KW-0093">Biotin biosynthesis</keyword>
<keyword id="KW-0408">Iron</keyword>
<keyword id="KW-0411">Iron-sulfur</keyword>
<keyword id="KW-0479">Metal-binding</keyword>
<keyword id="KW-1185">Reference proteome</keyword>
<keyword id="KW-0949">S-adenosyl-L-methionine</keyword>
<keyword id="KW-0808">Transferase</keyword>
<protein>
    <recommendedName>
        <fullName evidence="1">Biotin synthase</fullName>
        <ecNumber evidence="1">2.8.1.6</ecNumber>
    </recommendedName>
</protein>
<comment type="function">
    <text evidence="1">Catalyzes the conversion of dethiobiotin (DTB) to biotin by the insertion of a sulfur atom into dethiobiotin via a radical-based mechanism.</text>
</comment>
<comment type="catalytic activity">
    <reaction evidence="1">
        <text>(4R,5S)-dethiobiotin + (sulfur carrier)-SH + 2 reduced [2Fe-2S]-[ferredoxin] + 2 S-adenosyl-L-methionine = (sulfur carrier)-H + biotin + 2 5'-deoxyadenosine + 2 L-methionine + 2 oxidized [2Fe-2S]-[ferredoxin]</text>
        <dbReference type="Rhea" id="RHEA:22060"/>
        <dbReference type="Rhea" id="RHEA-COMP:10000"/>
        <dbReference type="Rhea" id="RHEA-COMP:10001"/>
        <dbReference type="Rhea" id="RHEA-COMP:14737"/>
        <dbReference type="Rhea" id="RHEA-COMP:14739"/>
        <dbReference type="ChEBI" id="CHEBI:17319"/>
        <dbReference type="ChEBI" id="CHEBI:29917"/>
        <dbReference type="ChEBI" id="CHEBI:33737"/>
        <dbReference type="ChEBI" id="CHEBI:33738"/>
        <dbReference type="ChEBI" id="CHEBI:57586"/>
        <dbReference type="ChEBI" id="CHEBI:57844"/>
        <dbReference type="ChEBI" id="CHEBI:59789"/>
        <dbReference type="ChEBI" id="CHEBI:64428"/>
        <dbReference type="ChEBI" id="CHEBI:149473"/>
        <dbReference type="EC" id="2.8.1.6"/>
    </reaction>
</comment>
<comment type="cofactor">
    <cofactor evidence="1">
        <name>[4Fe-4S] cluster</name>
        <dbReference type="ChEBI" id="CHEBI:49883"/>
    </cofactor>
    <text evidence="1">Binds 1 [4Fe-4S] cluster. The cluster is coordinated with 3 cysteines and an exchangeable S-adenosyl-L-methionine.</text>
</comment>
<comment type="cofactor">
    <cofactor evidence="1">
        <name>[2Fe-2S] cluster</name>
        <dbReference type="ChEBI" id="CHEBI:190135"/>
    </cofactor>
    <text evidence="1">Binds 1 [2Fe-2S] cluster. The cluster is coordinated with 3 cysteines and 1 arginine.</text>
</comment>
<comment type="pathway">
    <text evidence="1">Cofactor biosynthesis; biotin biosynthesis; biotin from 7,8-diaminononanoate: step 2/2.</text>
</comment>
<comment type="subunit">
    <text evidence="1">Homodimer.</text>
</comment>
<comment type="similarity">
    <text evidence="1">Belongs to the radical SAM superfamily. Biotin synthase family.</text>
</comment>
<comment type="sequence caution" evidence="3">
    <conflict type="erroneous initiation">
        <sequence resource="EMBL-CDS" id="ABO17823"/>
    </conflict>
</comment>
<dbReference type="EC" id="2.8.1.6" evidence="1"/>
<dbReference type="EMBL" id="CP000576">
    <property type="protein sequence ID" value="ABO17823.1"/>
    <property type="status" value="ALT_INIT"/>
    <property type="molecule type" value="Genomic_DNA"/>
</dbReference>
<dbReference type="RefSeq" id="WP_041484702.1">
    <property type="nucleotide sequence ID" value="NC_009091.1"/>
</dbReference>
<dbReference type="SMR" id="A3PDJ8"/>
<dbReference type="STRING" id="167546.P9301_12001"/>
<dbReference type="KEGG" id="pmg:P9301_12001"/>
<dbReference type="eggNOG" id="COG0502">
    <property type="taxonomic scope" value="Bacteria"/>
</dbReference>
<dbReference type="HOGENOM" id="CLU_033172_1_2_3"/>
<dbReference type="OrthoDB" id="9786826at2"/>
<dbReference type="UniPathway" id="UPA00078">
    <property type="reaction ID" value="UER00162"/>
</dbReference>
<dbReference type="Proteomes" id="UP000001430">
    <property type="component" value="Chromosome"/>
</dbReference>
<dbReference type="GO" id="GO:0051537">
    <property type="term" value="F:2 iron, 2 sulfur cluster binding"/>
    <property type="evidence" value="ECO:0007669"/>
    <property type="project" value="UniProtKB-KW"/>
</dbReference>
<dbReference type="GO" id="GO:0051539">
    <property type="term" value="F:4 iron, 4 sulfur cluster binding"/>
    <property type="evidence" value="ECO:0007669"/>
    <property type="project" value="UniProtKB-KW"/>
</dbReference>
<dbReference type="GO" id="GO:0004076">
    <property type="term" value="F:biotin synthase activity"/>
    <property type="evidence" value="ECO:0007669"/>
    <property type="project" value="UniProtKB-UniRule"/>
</dbReference>
<dbReference type="GO" id="GO:0005506">
    <property type="term" value="F:iron ion binding"/>
    <property type="evidence" value="ECO:0007669"/>
    <property type="project" value="UniProtKB-UniRule"/>
</dbReference>
<dbReference type="GO" id="GO:0009102">
    <property type="term" value="P:biotin biosynthetic process"/>
    <property type="evidence" value="ECO:0007669"/>
    <property type="project" value="UniProtKB-UniRule"/>
</dbReference>
<dbReference type="CDD" id="cd01335">
    <property type="entry name" value="Radical_SAM"/>
    <property type="match status" value="1"/>
</dbReference>
<dbReference type="Gene3D" id="3.20.20.70">
    <property type="entry name" value="Aldolase class I"/>
    <property type="match status" value="1"/>
</dbReference>
<dbReference type="HAMAP" id="MF_01694">
    <property type="entry name" value="BioB"/>
    <property type="match status" value="1"/>
</dbReference>
<dbReference type="InterPro" id="IPR013785">
    <property type="entry name" value="Aldolase_TIM"/>
</dbReference>
<dbReference type="InterPro" id="IPR010722">
    <property type="entry name" value="BATS_dom"/>
</dbReference>
<dbReference type="InterPro" id="IPR002684">
    <property type="entry name" value="Biotin_synth/BioAB"/>
</dbReference>
<dbReference type="InterPro" id="IPR024177">
    <property type="entry name" value="Biotin_synthase"/>
</dbReference>
<dbReference type="InterPro" id="IPR006638">
    <property type="entry name" value="Elp3/MiaA/NifB-like_rSAM"/>
</dbReference>
<dbReference type="InterPro" id="IPR007197">
    <property type="entry name" value="rSAM"/>
</dbReference>
<dbReference type="NCBIfam" id="TIGR00433">
    <property type="entry name" value="bioB"/>
    <property type="match status" value="1"/>
</dbReference>
<dbReference type="PANTHER" id="PTHR22976">
    <property type="entry name" value="BIOTIN SYNTHASE"/>
    <property type="match status" value="1"/>
</dbReference>
<dbReference type="PANTHER" id="PTHR22976:SF2">
    <property type="entry name" value="BIOTIN SYNTHASE, MITOCHONDRIAL"/>
    <property type="match status" value="1"/>
</dbReference>
<dbReference type="Pfam" id="PF06968">
    <property type="entry name" value="BATS"/>
    <property type="match status" value="1"/>
</dbReference>
<dbReference type="Pfam" id="PF04055">
    <property type="entry name" value="Radical_SAM"/>
    <property type="match status" value="1"/>
</dbReference>
<dbReference type="PIRSF" id="PIRSF001619">
    <property type="entry name" value="Biotin_synth"/>
    <property type="match status" value="1"/>
</dbReference>
<dbReference type="SFLD" id="SFLDF00272">
    <property type="entry name" value="biotin_synthase"/>
    <property type="match status" value="1"/>
</dbReference>
<dbReference type="SFLD" id="SFLDS00029">
    <property type="entry name" value="Radical_SAM"/>
    <property type="match status" value="1"/>
</dbReference>
<dbReference type="SMART" id="SM00876">
    <property type="entry name" value="BATS"/>
    <property type="match status" value="1"/>
</dbReference>
<dbReference type="SMART" id="SM00729">
    <property type="entry name" value="Elp3"/>
    <property type="match status" value="1"/>
</dbReference>
<dbReference type="SUPFAM" id="SSF102114">
    <property type="entry name" value="Radical SAM enzymes"/>
    <property type="match status" value="1"/>
</dbReference>
<dbReference type="PROSITE" id="PS51918">
    <property type="entry name" value="RADICAL_SAM"/>
    <property type="match status" value="1"/>
</dbReference>
<evidence type="ECO:0000255" key="1">
    <source>
        <dbReference type="HAMAP-Rule" id="MF_01694"/>
    </source>
</evidence>
<evidence type="ECO:0000255" key="2">
    <source>
        <dbReference type="PROSITE-ProRule" id="PRU01266"/>
    </source>
</evidence>
<evidence type="ECO:0000305" key="3"/>
<proteinExistence type="inferred from homology"/>
<name>BIOB_PROM0</name>
<feature type="chain" id="PRO_0000381536" description="Biotin synthase">
    <location>
        <begin position="1"/>
        <end position="335"/>
    </location>
</feature>
<feature type="domain" description="Radical SAM core" evidence="2">
    <location>
        <begin position="46"/>
        <end position="274"/>
    </location>
</feature>
<feature type="binding site" evidence="1">
    <location>
        <position position="61"/>
    </location>
    <ligand>
        <name>[4Fe-4S] cluster</name>
        <dbReference type="ChEBI" id="CHEBI:49883"/>
        <note>4Fe-4S-S-AdoMet</note>
    </ligand>
</feature>
<feature type="binding site" evidence="1">
    <location>
        <position position="65"/>
    </location>
    <ligand>
        <name>[4Fe-4S] cluster</name>
        <dbReference type="ChEBI" id="CHEBI:49883"/>
        <note>4Fe-4S-S-AdoMet</note>
    </ligand>
</feature>
<feature type="binding site" evidence="1">
    <location>
        <position position="68"/>
    </location>
    <ligand>
        <name>[4Fe-4S] cluster</name>
        <dbReference type="ChEBI" id="CHEBI:49883"/>
        <note>4Fe-4S-S-AdoMet</note>
    </ligand>
</feature>
<feature type="binding site" evidence="1">
    <location>
        <position position="105"/>
    </location>
    <ligand>
        <name>[2Fe-2S] cluster</name>
        <dbReference type="ChEBI" id="CHEBI:190135"/>
    </ligand>
</feature>
<feature type="binding site" evidence="1">
    <location>
        <position position="137"/>
    </location>
    <ligand>
        <name>[2Fe-2S] cluster</name>
        <dbReference type="ChEBI" id="CHEBI:190135"/>
    </ligand>
</feature>
<feature type="binding site" evidence="1">
    <location>
        <position position="197"/>
    </location>
    <ligand>
        <name>[2Fe-2S] cluster</name>
        <dbReference type="ChEBI" id="CHEBI:190135"/>
    </ligand>
</feature>
<feature type="binding site" evidence="1">
    <location>
        <position position="269"/>
    </location>
    <ligand>
        <name>[2Fe-2S] cluster</name>
        <dbReference type="ChEBI" id="CHEBI:190135"/>
    </ligand>
</feature>
<sequence>MANSNNQLLKEIRYDWNREEILQILNMPLIDLMWEAQIVHRKFNKYDIQLASLFSVKTGGCEENCSYCSQSIYSASEIKSHPQFQVEEVLARAKVAKNEGADRFCMGWAWREIRDGKSFNAMLEMVSGVRDLGMEACVTAGMLTEEQASRLADAGLTAYNHNLDTSPEHYKNIITTRTYQDRLDTIKRVRNAGINVCCGGIIGLGETNGDRASLLEVLSNMNPHPESVPINSLVAIEGTGLEDTQEIDSIEMIRMIATARILMPESKIRLSAGREKLTKEAQILCFQCGANSIFYGDELLTTSNPSFQSDRKLLKEVGVSFNKDFETCEKTLSSL</sequence>